<accession>P53256</accession>
<accession>D6VUM7</accession>
<accession>Q6TQU1</accession>
<dbReference type="EMBL" id="Z72880">
    <property type="protein sequence ID" value="CAA97098.1"/>
    <property type="status" value="ALT_INIT"/>
    <property type="molecule type" value="Genomic_DNA"/>
</dbReference>
<dbReference type="EMBL" id="AY389297">
    <property type="protein sequence ID" value="AAQ97229.1"/>
    <property type="molecule type" value="mRNA"/>
</dbReference>
<dbReference type="EMBL" id="BK006941">
    <property type="protein sequence ID" value="DAA08188.1"/>
    <property type="molecule type" value="Genomic_DNA"/>
</dbReference>
<dbReference type="PIR" id="S64390">
    <property type="entry name" value="S64390"/>
</dbReference>
<dbReference type="RefSeq" id="NP_011609.2">
    <property type="nucleotide sequence ID" value="NM_001181224.1"/>
</dbReference>
<dbReference type="PDB" id="4IFD">
    <property type="method" value="X-ray"/>
    <property type="resolution" value="2.80 A"/>
    <property type="chains" value="D=1-223"/>
</dbReference>
<dbReference type="PDB" id="4OO1">
    <property type="method" value="X-ray"/>
    <property type="resolution" value="3.30 A"/>
    <property type="chains" value="D=1-223"/>
</dbReference>
<dbReference type="PDB" id="5C0W">
    <property type="method" value="X-ray"/>
    <property type="resolution" value="4.60 A"/>
    <property type="chains" value="D=1-223"/>
</dbReference>
<dbReference type="PDB" id="5C0X">
    <property type="method" value="X-ray"/>
    <property type="resolution" value="3.81 A"/>
    <property type="chains" value="D=1-223"/>
</dbReference>
<dbReference type="PDB" id="5G06">
    <property type="method" value="EM"/>
    <property type="resolution" value="4.20 A"/>
    <property type="chains" value="D=1-223"/>
</dbReference>
<dbReference type="PDB" id="5JEA">
    <property type="method" value="X-ray"/>
    <property type="resolution" value="2.65 A"/>
    <property type="chains" value="D=1-223"/>
</dbReference>
<dbReference type="PDB" id="5K36">
    <property type="method" value="X-ray"/>
    <property type="resolution" value="3.10 A"/>
    <property type="chains" value="D=1-223"/>
</dbReference>
<dbReference type="PDB" id="5OKZ">
    <property type="method" value="X-ray"/>
    <property type="resolution" value="3.20 A"/>
    <property type="chains" value="D/N/X/h=1-223"/>
</dbReference>
<dbReference type="PDB" id="5VZJ">
    <property type="method" value="X-ray"/>
    <property type="resolution" value="3.30 A"/>
    <property type="chains" value="D=1-223"/>
</dbReference>
<dbReference type="PDB" id="6FSZ">
    <property type="method" value="EM"/>
    <property type="resolution" value="4.60 A"/>
    <property type="chains" value="DD=1-223"/>
</dbReference>
<dbReference type="PDB" id="6LQS">
    <property type="method" value="EM"/>
    <property type="resolution" value="3.80 A"/>
    <property type="chains" value="R6=1-223"/>
</dbReference>
<dbReference type="PDB" id="7AJT">
    <property type="method" value="EM"/>
    <property type="resolution" value="4.60 A"/>
    <property type="chains" value="EE=1-223"/>
</dbReference>
<dbReference type="PDB" id="7AJU">
    <property type="method" value="EM"/>
    <property type="resolution" value="3.80 A"/>
    <property type="chains" value="EE=1-223"/>
</dbReference>
<dbReference type="PDB" id="7D4I">
    <property type="method" value="EM"/>
    <property type="resolution" value="4.00 A"/>
    <property type="chains" value="R6=1-223"/>
</dbReference>
<dbReference type="PDB" id="8QCF">
    <property type="method" value="EM"/>
    <property type="resolution" value="2.55 A"/>
    <property type="chains" value="E=1-223"/>
</dbReference>
<dbReference type="PDBsum" id="4IFD"/>
<dbReference type="PDBsum" id="4OO1"/>
<dbReference type="PDBsum" id="5C0W"/>
<dbReference type="PDBsum" id="5C0X"/>
<dbReference type="PDBsum" id="5G06"/>
<dbReference type="PDBsum" id="5JEA"/>
<dbReference type="PDBsum" id="5K36"/>
<dbReference type="PDBsum" id="5OKZ"/>
<dbReference type="PDBsum" id="5VZJ"/>
<dbReference type="PDBsum" id="6FSZ"/>
<dbReference type="PDBsum" id="6LQS"/>
<dbReference type="PDBsum" id="7AJT"/>
<dbReference type="PDBsum" id="7AJU"/>
<dbReference type="PDBsum" id="7D4I"/>
<dbReference type="PDBsum" id="8QCF"/>
<dbReference type="EMDB" id="EMD-0952"/>
<dbReference type="EMDB" id="EMD-11807"/>
<dbReference type="EMDB" id="EMD-11808"/>
<dbReference type="EMDB" id="EMD-30574"/>
<dbReference type="EMDB" id="EMD-4301"/>
<dbReference type="SMR" id="P53256"/>
<dbReference type="BioGRID" id="33338">
    <property type="interactions" value="84"/>
</dbReference>
<dbReference type="ComplexPortal" id="CPX-599">
    <property type="entry name" value="Nuclear/nucleolar exosome complex, DIS3-RRP6 variant"/>
</dbReference>
<dbReference type="ComplexPortal" id="CPX-603">
    <property type="entry name" value="Cytoplasmic exosome complex, DIS3 variant"/>
</dbReference>
<dbReference type="DIP" id="DIP-6838N"/>
<dbReference type="FunCoup" id="P53256">
    <property type="interactions" value="326"/>
</dbReference>
<dbReference type="IntAct" id="P53256">
    <property type="interactions" value="71"/>
</dbReference>
<dbReference type="MINT" id="P53256"/>
<dbReference type="STRING" id="4932.YGR095C"/>
<dbReference type="iPTMnet" id="P53256"/>
<dbReference type="PaxDb" id="4932-YGR095C"/>
<dbReference type="PeptideAtlas" id="P53256"/>
<dbReference type="EnsemblFungi" id="YGR095C_mRNA">
    <property type="protein sequence ID" value="YGR095C"/>
    <property type="gene ID" value="YGR095C"/>
</dbReference>
<dbReference type="GeneID" id="852987"/>
<dbReference type="KEGG" id="sce:YGR095C"/>
<dbReference type="AGR" id="SGD:S000003327"/>
<dbReference type="SGD" id="S000003327">
    <property type="gene designation" value="RRP46"/>
</dbReference>
<dbReference type="VEuPathDB" id="FungiDB:YGR095C"/>
<dbReference type="eggNOG" id="KOG1069">
    <property type="taxonomic scope" value="Eukaryota"/>
</dbReference>
<dbReference type="GeneTree" id="ENSGT00940000153348"/>
<dbReference type="HOGENOM" id="CLU_063514_2_1_1"/>
<dbReference type="InParanoid" id="P53256"/>
<dbReference type="OMA" id="CIINEQG"/>
<dbReference type="OrthoDB" id="27298at2759"/>
<dbReference type="BioCyc" id="YEAST:G3O-30805-MONOMER"/>
<dbReference type="Reactome" id="R-SCE-429958">
    <property type="pathway name" value="mRNA decay by 3' to 5' exoribonuclease"/>
</dbReference>
<dbReference type="Reactome" id="R-SCE-450385">
    <property type="pathway name" value="Butyrate Response Factor 1 (BRF1) binds and destabilizes mRNA"/>
</dbReference>
<dbReference type="Reactome" id="R-SCE-450513">
    <property type="pathway name" value="Tristetraprolin (TTP, ZFP36) binds and destabilizes mRNA"/>
</dbReference>
<dbReference type="Reactome" id="R-SCE-6791226">
    <property type="pathway name" value="Major pathway of rRNA processing in the nucleolus and cytosol"/>
</dbReference>
<dbReference type="BioGRID-ORCS" id="852987">
    <property type="hits" value="4 hits in 10 CRISPR screens"/>
</dbReference>
<dbReference type="CD-CODE" id="BDAE0F88">
    <property type="entry name" value="Nucleolus"/>
</dbReference>
<dbReference type="EvolutionaryTrace" id="P53256"/>
<dbReference type="PRO" id="PR:P53256"/>
<dbReference type="Proteomes" id="UP000002311">
    <property type="component" value="Chromosome VII"/>
</dbReference>
<dbReference type="RNAct" id="P53256">
    <property type="molecule type" value="protein"/>
</dbReference>
<dbReference type="GO" id="GO:0000177">
    <property type="term" value="C:cytoplasmic exosome (RNase complex)"/>
    <property type="evidence" value="ECO:0000314"/>
    <property type="project" value="SGD"/>
</dbReference>
<dbReference type="GO" id="GO:0000178">
    <property type="term" value="C:exosome (RNase complex)"/>
    <property type="evidence" value="ECO:0000353"/>
    <property type="project" value="ComplexPortal"/>
</dbReference>
<dbReference type="GO" id="GO:0000176">
    <property type="term" value="C:nuclear exosome (RNase complex)"/>
    <property type="evidence" value="ECO:0000314"/>
    <property type="project" value="SGD"/>
</dbReference>
<dbReference type="GO" id="GO:0005730">
    <property type="term" value="C:nucleolus"/>
    <property type="evidence" value="ECO:0000314"/>
    <property type="project" value="ComplexPortal"/>
</dbReference>
<dbReference type="GO" id="GO:0005634">
    <property type="term" value="C:nucleus"/>
    <property type="evidence" value="ECO:0000314"/>
    <property type="project" value="ComplexPortal"/>
</dbReference>
<dbReference type="GO" id="GO:0003723">
    <property type="term" value="F:RNA binding"/>
    <property type="evidence" value="ECO:0000318"/>
    <property type="project" value="GO_Central"/>
</dbReference>
<dbReference type="GO" id="GO:0000467">
    <property type="term" value="P:exonucleolytic trimming to generate mature 3'-end of 5.8S rRNA from tricistronic rRNA transcript (SSU-rRNA, 5.8S rRNA, LSU-rRNA)"/>
    <property type="evidence" value="ECO:0000315"/>
    <property type="project" value="SGD"/>
</dbReference>
<dbReference type="GO" id="GO:0071028">
    <property type="term" value="P:nuclear mRNA surveillance"/>
    <property type="evidence" value="ECO:0000318"/>
    <property type="project" value="GO_Central"/>
</dbReference>
<dbReference type="GO" id="GO:0071042">
    <property type="term" value="P:nuclear polyadenylation-dependent mRNA catabolic process"/>
    <property type="evidence" value="ECO:0000315"/>
    <property type="project" value="SGD"/>
</dbReference>
<dbReference type="GO" id="GO:0071035">
    <property type="term" value="P:nuclear polyadenylation-dependent rRNA catabolic process"/>
    <property type="evidence" value="ECO:0000315"/>
    <property type="project" value="SGD"/>
</dbReference>
<dbReference type="GO" id="GO:0071051">
    <property type="term" value="P:poly(A)-dependent snoRNA 3'-end processing"/>
    <property type="evidence" value="ECO:0000318"/>
    <property type="project" value="GO_Central"/>
</dbReference>
<dbReference type="GO" id="GO:0006401">
    <property type="term" value="P:RNA catabolic process"/>
    <property type="evidence" value="ECO:0000314"/>
    <property type="project" value="ComplexPortal"/>
</dbReference>
<dbReference type="GO" id="GO:0006396">
    <property type="term" value="P:RNA processing"/>
    <property type="evidence" value="ECO:0000314"/>
    <property type="project" value="ComplexPortal"/>
</dbReference>
<dbReference type="GO" id="GO:0016075">
    <property type="term" value="P:rRNA catabolic process"/>
    <property type="evidence" value="ECO:0000318"/>
    <property type="project" value="GO_Central"/>
</dbReference>
<dbReference type="GO" id="GO:0071038">
    <property type="term" value="P:TRAMP-dependent tRNA surveillance pathway"/>
    <property type="evidence" value="ECO:0000314"/>
    <property type="project" value="SGD"/>
</dbReference>
<dbReference type="GO" id="GO:0034475">
    <property type="term" value="P:U4 snRNA 3'-end processing"/>
    <property type="evidence" value="ECO:0000318"/>
    <property type="project" value="GO_Central"/>
</dbReference>
<dbReference type="CDD" id="cd11372">
    <property type="entry name" value="RNase_PH_RRP46"/>
    <property type="match status" value="1"/>
</dbReference>
<dbReference type="FunFam" id="3.30.230.70:FF:000027">
    <property type="entry name" value="Exosome complex component RRP46"/>
    <property type="match status" value="1"/>
</dbReference>
<dbReference type="Gene3D" id="3.30.230.70">
    <property type="entry name" value="GHMP Kinase, N-terminal domain"/>
    <property type="match status" value="1"/>
</dbReference>
<dbReference type="InterPro" id="IPR001247">
    <property type="entry name" value="ExoRNase_PH_dom1"/>
</dbReference>
<dbReference type="InterPro" id="IPR015847">
    <property type="entry name" value="ExoRNase_PH_dom2"/>
</dbReference>
<dbReference type="InterPro" id="IPR036345">
    <property type="entry name" value="ExoRNase_PH_dom2_sf"/>
</dbReference>
<dbReference type="InterPro" id="IPR027408">
    <property type="entry name" value="PNPase/RNase_PH_dom_sf"/>
</dbReference>
<dbReference type="InterPro" id="IPR020568">
    <property type="entry name" value="Ribosomal_Su5_D2-typ_SF"/>
</dbReference>
<dbReference type="InterPro" id="IPR050080">
    <property type="entry name" value="RNase_PH"/>
</dbReference>
<dbReference type="PANTHER" id="PTHR11953">
    <property type="entry name" value="EXOSOME COMPLEX COMPONENT"/>
    <property type="match status" value="1"/>
</dbReference>
<dbReference type="PANTHER" id="PTHR11953:SF1">
    <property type="entry name" value="EXOSOME COMPLEX COMPONENT RRP46"/>
    <property type="match status" value="1"/>
</dbReference>
<dbReference type="Pfam" id="PF01138">
    <property type="entry name" value="RNase_PH"/>
    <property type="match status" value="1"/>
</dbReference>
<dbReference type="Pfam" id="PF03725">
    <property type="entry name" value="RNase_PH_C"/>
    <property type="match status" value="1"/>
</dbReference>
<dbReference type="SUPFAM" id="SSF55666">
    <property type="entry name" value="Ribonuclease PH domain 2-like"/>
    <property type="match status" value="1"/>
</dbReference>
<dbReference type="SUPFAM" id="SSF54211">
    <property type="entry name" value="Ribosomal protein S5 domain 2-like"/>
    <property type="match status" value="1"/>
</dbReference>
<gene>
    <name type="primary">RRP46</name>
    <name type="ordered locus">YGR095C</name>
</gene>
<proteinExistence type="evidence at protein level"/>
<name>RRP46_YEAST</name>
<sequence>MSVQAEIGILDHVDGSSEFVSQDTKVICSVTGPIEPKARQELPTQLALEIIVRPAKGVATTREKVLEDKLRAVLTPLITRHCYPRQLCQITCQILESGEDEAEFSLRELSCCINAAFLALVDAGIALNSMCASIPIAIIKDTSDIIVDPTAEQLKISLSVHTLALEFVNGGKVVKNVLLLDSNGDFNEDQLFSLLELGEQKCQELVTNIRRIIQDNISPRLVV</sequence>
<feature type="chain" id="PRO_0000139978" description="Exosome complex component RRP46">
    <location>
        <begin position="1"/>
        <end position="223"/>
    </location>
</feature>
<feature type="strand" evidence="7">
    <location>
        <begin position="4"/>
        <end position="7"/>
    </location>
</feature>
<feature type="strand" evidence="7">
    <location>
        <begin position="11"/>
        <end position="21"/>
    </location>
</feature>
<feature type="strand" evidence="7">
    <location>
        <begin position="24"/>
        <end position="34"/>
    </location>
</feature>
<feature type="turn" evidence="7">
    <location>
        <begin position="38"/>
        <end position="40"/>
    </location>
</feature>
<feature type="strand" evidence="7">
    <location>
        <begin position="43"/>
        <end position="45"/>
    </location>
</feature>
<feature type="strand" evidence="7">
    <location>
        <begin position="47"/>
        <end position="53"/>
    </location>
</feature>
<feature type="strand" evidence="7">
    <location>
        <begin position="55"/>
        <end position="57"/>
    </location>
</feature>
<feature type="helix" evidence="7">
    <location>
        <begin position="61"/>
        <end position="77"/>
    </location>
</feature>
<feature type="helix" evidence="7">
    <location>
        <begin position="80"/>
        <end position="82"/>
    </location>
</feature>
<feature type="strand" evidence="7">
    <location>
        <begin position="87"/>
        <end position="96"/>
    </location>
</feature>
<feature type="turn" evidence="7">
    <location>
        <begin position="101"/>
        <end position="103"/>
    </location>
</feature>
<feature type="helix" evidence="7">
    <location>
        <begin position="106"/>
        <end position="123"/>
    </location>
</feature>
<feature type="strand" evidence="7">
    <location>
        <begin position="127"/>
        <end position="139"/>
    </location>
</feature>
<feature type="turn" evidence="7">
    <location>
        <begin position="140"/>
        <end position="142"/>
    </location>
</feature>
<feature type="strand" evidence="7">
    <location>
        <begin position="145"/>
        <end position="148"/>
    </location>
</feature>
<feature type="helix" evidence="7">
    <location>
        <begin position="151"/>
        <end position="155"/>
    </location>
</feature>
<feature type="strand" evidence="7">
    <location>
        <begin position="157"/>
        <end position="168"/>
    </location>
</feature>
<feature type="turn" evidence="7">
    <location>
        <begin position="169"/>
        <end position="172"/>
    </location>
</feature>
<feature type="strand" evidence="7">
    <location>
        <begin position="173"/>
        <end position="186"/>
    </location>
</feature>
<feature type="helix" evidence="7">
    <location>
        <begin position="188"/>
        <end position="217"/>
    </location>
</feature>
<feature type="helix" evidence="7">
    <location>
        <begin position="218"/>
        <end position="220"/>
    </location>
</feature>
<reference key="1">
    <citation type="journal article" date="1997" name="Nature">
        <title>The nucleotide sequence of Saccharomyces cerevisiae chromosome VII.</title>
        <authorList>
            <person name="Tettelin H."/>
            <person name="Agostoni-Carbone M.L."/>
            <person name="Albermann K."/>
            <person name="Albers M."/>
            <person name="Arroyo J."/>
            <person name="Backes U."/>
            <person name="Barreiros T."/>
            <person name="Bertani I."/>
            <person name="Bjourson A.J."/>
            <person name="Brueckner M."/>
            <person name="Bruschi C.V."/>
            <person name="Carignani G."/>
            <person name="Castagnoli L."/>
            <person name="Cerdan E."/>
            <person name="Clemente M.L."/>
            <person name="Coblenz A."/>
            <person name="Coglievina M."/>
            <person name="Coissac E."/>
            <person name="Defoor E."/>
            <person name="Del Bino S."/>
            <person name="Delius H."/>
            <person name="Delneri D."/>
            <person name="de Wergifosse P."/>
            <person name="Dujon B."/>
            <person name="Durand P."/>
            <person name="Entian K.-D."/>
            <person name="Eraso P."/>
            <person name="Escribano V."/>
            <person name="Fabiani L."/>
            <person name="Fartmann B."/>
            <person name="Feroli F."/>
            <person name="Feuermann M."/>
            <person name="Frontali L."/>
            <person name="Garcia-Gonzalez M."/>
            <person name="Garcia-Saez M.I."/>
            <person name="Goffeau A."/>
            <person name="Guerreiro P."/>
            <person name="Hani J."/>
            <person name="Hansen M."/>
            <person name="Hebling U."/>
            <person name="Hernandez K."/>
            <person name="Heumann K."/>
            <person name="Hilger F."/>
            <person name="Hofmann B."/>
            <person name="Indge K.J."/>
            <person name="James C.M."/>
            <person name="Klima R."/>
            <person name="Koetter P."/>
            <person name="Kramer B."/>
            <person name="Kramer W."/>
            <person name="Lauquin G."/>
            <person name="Leuther H."/>
            <person name="Louis E.J."/>
            <person name="Maillier E."/>
            <person name="Marconi A."/>
            <person name="Martegani E."/>
            <person name="Mazon M.J."/>
            <person name="Mazzoni C."/>
            <person name="McReynolds A.D.K."/>
            <person name="Melchioretto P."/>
            <person name="Mewes H.-W."/>
            <person name="Minenkova O."/>
            <person name="Mueller-Auer S."/>
            <person name="Nawrocki A."/>
            <person name="Netter P."/>
            <person name="Neu R."/>
            <person name="Nombela C."/>
            <person name="Oliver S.G."/>
            <person name="Panzeri L."/>
            <person name="Paoluzi S."/>
            <person name="Plevani P."/>
            <person name="Portetelle D."/>
            <person name="Portillo F."/>
            <person name="Potier S."/>
            <person name="Purnelle B."/>
            <person name="Rieger M."/>
            <person name="Riles L."/>
            <person name="Rinaldi T."/>
            <person name="Robben J."/>
            <person name="Rodrigues-Pousada C."/>
            <person name="Rodriguez-Belmonte E."/>
            <person name="Rodriguez-Torres A.M."/>
            <person name="Rose M."/>
            <person name="Ruzzi M."/>
            <person name="Saliola M."/>
            <person name="Sanchez-Perez M."/>
            <person name="Schaefer B."/>
            <person name="Schaefer M."/>
            <person name="Scharfe M."/>
            <person name="Schmidheini T."/>
            <person name="Schreer A."/>
            <person name="Skala J."/>
            <person name="Souciet J.-L."/>
            <person name="Steensma H.Y."/>
            <person name="Talla E."/>
            <person name="Thierry A."/>
            <person name="Vandenbol M."/>
            <person name="van der Aart Q.J.M."/>
            <person name="Van Dyck L."/>
            <person name="Vanoni M."/>
            <person name="Verhasselt P."/>
            <person name="Voet M."/>
            <person name="Volckaert G."/>
            <person name="Wambutt R."/>
            <person name="Watson M.D."/>
            <person name="Weber N."/>
            <person name="Wedler E."/>
            <person name="Wedler H."/>
            <person name="Wipfli P."/>
            <person name="Wolf K."/>
            <person name="Wright L.F."/>
            <person name="Zaccaria P."/>
            <person name="Zimmermann M."/>
            <person name="Zollner A."/>
            <person name="Kleine K."/>
        </authorList>
    </citation>
    <scope>NUCLEOTIDE SEQUENCE [LARGE SCALE GENOMIC DNA]</scope>
    <source>
        <strain>ATCC 204508 / S288c</strain>
    </source>
</reference>
<reference key="2">
    <citation type="journal article" date="2014" name="G3 (Bethesda)">
        <title>The reference genome sequence of Saccharomyces cerevisiae: Then and now.</title>
        <authorList>
            <person name="Engel S.R."/>
            <person name="Dietrich F.S."/>
            <person name="Fisk D.G."/>
            <person name="Binkley G."/>
            <person name="Balakrishnan R."/>
            <person name="Costanzo M.C."/>
            <person name="Dwight S.S."/>
            <person name="Hitz B.C."/>
            <person name="Karra K."/>
            <person name="Nash R.S."/>
            <person name="Weng S."/>
            <person name="Wong E.D."/>
            <person name="Lloyd P."/>
            <person name="Skrzypek M.S."/>
            <person name="Miyasato S.R."/>
            <person name="Simison M."/>
            <person name="Cherry J.M."/>
        </authorList>
    </citation>
    <scope>GENOME REANNOTATION</scope>
    <source>
        <strain>ATCC 204508 / S288c</strain>
    </source>
</reference>
<reference key="3">
    <citation type="submission" date="2003-09" db="EMBL/GenBank/DDBJ databases">
        <authorList>
            <person name="Kennedy M.C."/>
            <person name="Dietrich F.S."/>
        </authorList>
    </citation>
    <scope>NUCLEOTIDE SEQUENCE [MRNA] OF 1-67</scope>
    <source>
        <strain>ATCC 204511 / S288c / AB972</strain>
    </source>
</reference>
<reference key="4">
    <citation type="journal article" date="1999" name="Genes Dev.">
        <title>The yeast exosome and human PM-Scl are related complexes of 3'--&gt;5' exonucleases.</title>
        <authorList>
            <person name="Allmang C."/>
            <person name="Petfalski E."/>
            <person name="Podtelejnikov A."/>
            <person name="Mann M."/>
            <person name="Tollervey D."/>
            <person name="Mitchell P."/>
        </authorList>
    </citation>
    <scope>FUNCTION</scope>
    <scope>IDENTIFICATION IN THE EXOSOME COMPLEX BY MASS SPECTROMETRY</scope>
</reference>
<reference key="5">
    <citation type="journal article" date="2003" name="Cell">
        <title>A panoramic view of yeast noncoding RNA processing.</title>
        <authorList>
            <person name="Peng W.-T."/>
            <person name="Robinson M.D."/>
            <person name="Mnaimneh S."/>
            <person name="Krogan N.J."/>
            <person name="Cagney G."/>
            <person name="Morris Q.D."/>
            <person name="Davierwala A.P."/>
            <person name="Grigull J."/>
            <person name="Yang X."/>
            <person name="Zhang W."/>
            <person name="Mitsakakis N."/>
            <person name="Ryan O.W."/>
            <person name="Datta N."/>
            <person name="Jojic V."/>
            <person name="Pal C."/>
            <person name="Canadien V."/>
            <person name="Richards D.P."/>
            <person name="Beattie B."/>
            <person name="Wu L.F."/>
            <person name="Altschuler S.J."/>
            <person name="Roweis S."/>
            <person name="Frey B.J."/>
            <person name="Emili A."/>
            <person name="Greenblatt J.F."/>
            <person name="Hughes T.R."/>
        </authorList>
    </citation>
    <scope>INTERACTION WITH LRP1</scope>
</reference>
<reference key="6">
    <citation type="journal article" date="2003" name="Nature">
        <title>Sequencing and comparison of yeast species to identify genes and regulatory elements.</title>
        <authorList>
            <person name="Kellis M."/>
            <person name="Patterson N."/>
            <person name="Endrizzi M."/>
            <person name="Birren B.W."/>
            <person name="Lander E.S."/>
        </authorList>
    </citation>
    <scope>IDENTIFICATION OF PROBABLE INITIATION SITE</scope>
</reference>
<reference key="7">
    <citation type="journal article" date="2003" name="Nature">
        <title>Global analysis of protein localization in budding yeast.</title>
        <authorList>
            <person name="Huh W.-K."/>
            <person name="Falvo J.V."/>
            <person name="Gerke L.C."/>
            <person name="Carroll A.S."/>
            <person name="Howson R.W."/>
            <person name="Weissman J.S."/>
            <person name="O'Shea E.K."/>
        </authorList>
    </citation>
    <scope>SUBCELLULAR LOCATION [LARGE SCALE ANALYSIS]</scope>
</reference>
<reference key="8">
    <citation type="journal article" date="2003" name="Nature">
        <title>Global analysis of protein expression in yeast.</title>
        <authorList>
            <person name="Ghaemmaghami S."/>
            <person name="Huh W.-K."/>
            <person name="Bower K."/>
            <person name="Howson R.W."/>
            <person name="Belle A."/>
            <person name="Dephoure N."/>
            <person name="O'Shea E.K."/>
            <person name="Weissman J.S."/>
        </authorList>
    </citation>
    <scope>LEVEL OF PROTEIN EXPRESSION [LARGE SCALE ANALYSIS]</scope>
</reference>
<reference key="9">
    <citation type="journal article" date="2006" name="Cell">
        <title>Reconstitution, activities, and structure of the eukaryotic RNA exosome.</title>
        <authorList>
            <person name="Liu Q."/>
            <person name="Greimann J.C."/>
            <person name="Lima C.D."/>
        </authorList>
    </citation>
    <scope>RECONSTITUTION OF THE RNA EXOSOME COMPLEX</scope>
    <scope>LACK OF EXONUCLEASE ACTIVITY</scope>
</reference>
<reference key="10">
    <citation type="journal article" date="2007" name="Cell">
        <authorList>
            <person name="Liu Q."/>
            <person name="Greimann J.C."/>
            <person name="Lima C.D."/>
        </authorList>
    </citation>
    <scope>ERRATUM OF PUBMED:17174896</scope>
</reference>
<reference key="11">
    <citation type="journal article" date="2007" name="Nat. Struct. Mol. Biol.">
        <title>A single subunit, Dis3, is essentially responsible for yeast exosome core activity.</title>
        <authorList>
            <person name="Dziembowski A."/>
            <person name="Lorentzen E."/>
            <person name="Conti E."/>
            <person name="Seraphin B."/>
        </authorList>
    </citation>
    <scope>IDENTIFICATION BY MASS SPECTROMETRY</scope>
    <scope>FUNCTION OF THE RNA EXOSOME COMPLEX</scope>
    <scope>SUBUNIT</scope>
</reference>
<protein>
    <recommendedName>
        <fullName>Exosome complex component RRP46</fullName>
    </recommendedName>
    <alternativeName>
        <fullName>Ribosomal RNA-processing protein 46</fullName>
    </alternativeName>
</protein>
<comment type="function">
    <text evidence="1 5">Non-catalytic component of the RNA exosome complex which has 3'-&gt;5' exoribonuclease activity and participates in a multitude of cellular RNA processing and degradation events. In the nucleus, the RNA exosome complex is involved in proper maturation of stable RNA species such as rRNA, snRNA and snoRNA, in the elimination of RNA processing by-products and non-coding 'pervasive' transcripts, such as antisense RNA species and cryptic unstable transcripts (CUTs), and of mRNAs with processing defects, thereby limiting or excluding their export to the cytoplasm. In the cytoplasm, the RNA exosome complex is involved in general mRNA turnover and in RNA surveillance pathways, preventing translation of aberrant mRNAs. The catalytic inactive RNA exosome core complex of 9 subunits (Exo-9) is proposed to play a pivotal role in the binding and presentation of RNA for ribonucleolysis, and to serve as a scaffold for the association with catalytic subunits and accessory proteins or complexes. RRP46 is part of the hexameric ring of RNase PH domain-containing subunits proposed to form a central channel which threads RNA substrates for degradation.</text>
</comment>
<comment type="subunit">
    <text evidence="1 2 5">Component of the RNA exosome complex. Specifically part of the catalytically inactive RNA exosome core complex (Exo-9) which may associate with the catalytic subunits RRP6 and DIS3 in cytoplasmic- and nuclear-specific RNA exosome complex forms. Exo-9 is formed by a hexameric base ring of RNase PH domain-containing subunits and a cap ring consisting of CSL4, RRP4 and RRP40.</text>
</comment>
<comment type="interaction">
    <interactant intactId="EBI-1842">
        <id>P53256</id>
    </interactant>
    <interactant intactId="EBI-1731">
        <id>P53859</id>
        <label>CSL4</label>
    </interactant>
    <organismsDiffer>false</organismsDiffer>
    <experiments>17</experiments>
</comment>
<comment type="interaction">
    <interactant intactId="EBI-1842">
        <id>P53256</id>
    </interactant>
    <interactant intactId="EBI-1740">
        <id>Q08162</id>
        <label>DIS3</label>
    </interactant>
    <organismsDiffer>false</organismsDiffer>
    <experiments>6</experiments>
</comment>
<comment type="interaction">
    <interactant intactId="EBI-1842">
        <id>P53256</id>
    </interactant>
    <interactant intactId="EBI-1788">
        <id>P46948</id>
        <label>SKI6</label>
    </interactant>
    <organismsDiffer>false</organismsDiffer>
    <experiments>7</experiments>
</comment>
<comment type="subcellular location">
    <subcellularLocation>
        <location evidence="3">Cytoplasm</location>
    </subcellularLocation>
    <subcellularLocation>
        <location evidence="3">Nucleus</location>
        <location evidence="3">Nucleolus</location>
    </subcellularLocation>
</comment>
<comment type="miscellaneous">
    <text evidence="4">Present with 10800 molecules/cell in log phase SD medium.</text>
</comment>
<comment type="similarity">
    <text evidence="6">Belongs to the RNase PH family.</text>
</comment>
<comment type="caution">
    <text evidence="6">According to PubMed:17173052 and PubMed:17174896, only DIS3/RRP44 subunit of the exosome core has exonuclease activity.</text>
</comment>
<comment type="sequence caution" evidence="6">
    <conflict type="erroneous initiation">
        <sequence resource="EMBL-CDS" id="CAA97098"/>
    </conflict>
</comment>
<keyword id="KW-0002">3D-structure</keyword>
<keyword id="KW-0963">Cytoplasm</keyword>
<keyword id="KW-0271">Exosome</keyword>
<keyword id="KW-0539">Nucleus</keyword>
<keyword id="KW-1185">Reference proteome</keyword>
<keyword id="KW-0694">RNA-binding</keyword>
<keyword id="KW-0698">rRNA processing</keyword>
<evidence type="ECO:0000269" key="1">
    <source>
    </source>
</evidence>
<evidence type="ECO:0000269" key="2">
    <source>
    </source>
</evidence>
<evidence type="ECO:0000269" key="3">
    <source>
    </source>
</evidence>
<evidence type="ECO:0000269" key="4">
    <source>
    </source>
</evidence>
<evidence type="ECO:0000269" key="5">
    <source>
    </source>
</evidence>
<evidence type="ECO:0000305" key="6"/>
<evidence type="ECO:0007829" key="7">
    <source>
        <dbReference type="PDB" id="5JEA"/>
    </source>
</evidence>
<organism>
    <name type="scientific">Saccharomyces cerevisiae (strain ATCC 204508 / S288c)</name>
    <name type="common">Baker's yeast</name>
    <dbReference type="NCBI Taxonomy" id="559292"/>
    <lineage>
        <taxon>Eukaryota</taxon>
        <taxon>Fungi</taxon>
        <taxon>Dikarya</taxon>
        <taxon>Ascomycota</taxon>
        <taxon>Saccharomycotina</taxon>
        <taxon>Saccharomycetes</taxon>
        <taxon>Saccharomycetales</taxon>
        <taxon>Saccharomycetaceae</taxon>
        <taxon>Saccharomyces</taxon>
    </lineage>
</organism>